<feature type="chain" id="PRO_1000129543" description="UDP-2,3-diacylglucosamine hydrolase">
    <location>
        <begin position="1"/>
        <end position="247"/>
    </location>
</feature>
<feature type="binding site" evidence="1">
    <location>
        <position position="8"/>
    </location>
    <ligand>
        <name>Mn(2+)</name>
        <dbReference type="ChEBI" id="CHEBI:29035"/>
        <label>1</label>
    </ligand>
</feature>
<feature type="binding site" evidence="1">
    <location>
        <position position="10"/>
    </location>
    <ligand>
        <name>Mn(2+)</name>
        <dbReference type="ChEBI" id="CHEBI:29035"/>
        <label>1</label>
    </ligand>
</feature>
<feature type="binding site" evidence="1">
    <location>
        <position position="41"/>
    </location>
    <ligand>
        <name>Mn(2+)</name>
        <dbReference type="ChEBI" id="CHEBI:29035"/>
        <label>1</label>
    </ligand>
</feature>
<feature type="binding site" evidence="1">
    <location>
        <position position="41"/>
    </location>
    <ligand>
        <name>Mn(2+)</name>
        <dbReference type="ChEBI" id="CHEBI:29035"/>
        <label>2</label>
    </ligand>
</feature>
<feature type="binding site" evidence="1">
    <location>
        <begin position="79"/>
        <end position="80"/>
    </location>
    <ligand>
        <name>substrate</name>
    </ligand>
</feature>
<feature type="binding site" evidence="1">
    <location>
        <position position="79"/>
    </location>
    <ligand>
        <name>Mn(2+)</name>
        <dbReference type="ChEBI" id="CHEBI:29035"/>
        <label>2</label>
    </ligand>
</feature>
<feature type="binding site" evidence="1">
    <location>
        <position position="114"/>
    </location>
    <ligand>
        <name>Mn(2+)</name>
        <dbReference type="ChEBI" id="CHEBI:29035"/>
        <label>2</label>
    </ligand>
</feature>
<feature type="binding site" evidence="1">
    <location>
        <position position="122"/>
    </location>
    <ligand>
        <name>substrate</name>
    </ligand>
</feature>
<feature type="binding site" evidence="1">
    <location>
        <position position="160"/>
    </location>
    <ligand>
        <name>substrate</name>
    </ligand>
</feature>
<feature type="binding site" evidence="1">
    <location>
        <position position="171"/>
    </location>
    <ligand>
        <name>substrate</name>
    </ligand>
</feature>
<feature type="binding site" evidence="1">
    <location>
        <position position="174"/>
    </location>
    <ligand>
        <name>substrate</name>
    </ligand>
</feature>
<feature type="binding site" evidence="1">
    <location>
        <position position="202"/>
    </location>
    <ligand>
        <name>Mn(2+)</name>
        <dbReference type="ChEBI" id="CHEBI:29035"/>
        <label>2</label>
    </ligand>
</feature>
<feature type="binding site" evidence="1">
    <location>
        <position position="202"/>
    </location>
    <ligand>
        <name>substrate</name>
    </ligand>
</feature>
<feature type="binding site" evidence="1">
    <location>
        <position position="204"/>
    </location>
    <ligand>
        <name>Mn(2+)</name>
        <dbReference type="ChEBI" id="CHEBI:29035"/>
        <label>1</label>
    </ligand>
</feature>
<gene>
    <name evidence="1" type="primary">lpxH</name>
    <name type="ordered locus">xcc-b100_3394</name>
</gene>
<dbReference type="EC" id="3.6.1.54" evidence="1"/>
<dbReference type="EMBL" id="AM920689">
    <property type="protein sequence ID" value="CAP52759.1"/>
    <property type="molecule type" value="Genomic_DNA"/>
</dbReference>
<dbReference type="SMR" id="B0RU17"/>
<dbReference type="KEGG" id="xca:xcc-b100_3394"/>
<dbReference type="HOGENOM" id="CLU_074586_0_0_6"/>
<dbReference type="UniPathway" id="UPA00359">
    <property type="reaction ID" value="UER00480"/>
</dbReference>
<dbReference type="Proteomes" id="UP000001188">
    <property type="component" value="Chromosome"/>
</dbReference>
<dbReference type="GO" id="GO:0005737">
    <property type="term" value="C:cytoplasm"/>
    <property type="evidence" value="ECO:0007669"/>
    <property type="project" value="InterPro"/>
</dbReference>
<dbReference type="GO" id="GO:0019897">
    <property type="term" value="C:extrinsic component of plasma membrane"/>
    <property type="evidence" value="ECO:0007669"/>
    <property type="project" value="UniProtKB-UniRule"/>
</dbReference>
<dbReference type="GO" id="GO:0030145">
    <property type="term" value="F:manganese ion binding"/>
    <property type="evidence" value="ECO:0007669"/>
    <property type="project" value="UniProtKB-UniRule"/>
</dbReference>
<dbReference type="GO" id="GO:0008758">
    <property type="term" value="F:UDP-2,3-diacylglucosamine hydrolase activity"/>
    <property type="evidence" value="ECO:0007669"/>
    <property type="project" value="UniProtKB-UniRule"/>
</dbReference>
<dbReference type="GO" id="GO:0009245">
    <property type="term" value="P:lipid A biosynthetic process"/>
    <property type="evidence" value="ECO:0007669"/>
    <property type="project" value="UniProtKB-UniRule"/>
</dbReference>
<dbReference type="CDD" id="cd07398">
    <property type="entry name" value="MPP_YbbF-LpxH"/>
    <property type="match status" value="1"/>
</dbReference>
<dbReference type="Gene3D" id="3.60.21.10">
    <property type="match status" value="1"/>
</dbReference>
<dbReference type="HAMAP" id="MF_00575">
    <property type="entry name" value="LpxH"/>
    <property type="match status" value="1"/>
</dbReference>
<dbReference type="InterPro" id="IPR004843">
    <property type="entry name" value="Calcineurin-like_PHP_ApaH"/>
</dbReference>
<dbReference type="InterPro" id="IPR043461">
    <property type="entry name" value="LpxH-like"/>
</dbReference>
<dbReference type="InterPro" id="IPR029052">
    <property type="entry name" value="Metallo-depent_PP-like"/>
</dbReference>
<dbReference type="InterPro" id="IPR010138">
    <property type="entry name" value="UDP-diacylglucosamine_Hdrlase"/>
</dbReference>
<dbReference type="NCBIfam" id="TIGR01854">
    <property type="entry name" value="lipid_A_lpxH"/>
    <property type="match status" value="1"/>
</dbReference>
<dbReference type="NCBIfam" id="NF003743">
    <property type="entry name" value="PRK05340.1"/>
    <property type="match status" value="1"/>
</dbReference>
<dbReference type="PANTHER" id="PTHR34990:SF1">
    <property type="entry name" value="UDP-2,3-DIACYLGLUCOSAMINE HYDROLASE"/>
    <property type="match status" value="1"/>
</dbReference>
<dbReference type="PANTHER" id="PTHR34990">
    <property type="entry name" value="UDP-2,3-DIACYLGLUCOSAMINE HYDROLASE-RELATED"/>
    <property type="match status" value="1"/>
</dbReference>
<dbReference type="Pfam" id="PF00149">
    <property type="entry name" value="Metallophos"/>
    <property type="match status" value="1"/>
</dbReference>
<dbReference type="SUPFAM" id="SSF56300">
    <property type="entry name" value="Metallo-dependent phosphatases"/>
    <property type="match status" value="1"/>
</dbReference>
<reference key="1">
    <citation type="journal article" date="2008" name="J. Biotechnol.">
        <title>The genome of Xanthomonas campestris pv. campestris B100 and its use for the reconstruction of metabolic pathways involved in xanthan biosynthesis.</title>
        <authorList>
            <person name="Vorhoelter F.-J."/>
            <person name="Schneiker S."/>
            <person name="Goesmann A."/>
            <person name="Krause L."/>
            <person name="Bekel T."/>
            <person name="Kaiser O."/>
            <person name="Linke B."/>
            <person name="Patschkowski T."/>
            <person name="Rueckert C."/>
            <person name="Schmid J."/>
            <person name="Sidhu V.K."/>
            <person name="Sieber V."/>
            <person name="Tauch A."/>
            <person name="Watt S.A."/>
            <person name="Weisshaar B."/>
            <person name="Becker A."/>
            <person name="Niehaus K."/>
            <person name="Puehler A."/>
        </authorList>
    </citation>
    <scope>NUCLEOTIDE SEQUENCE [LARGE SCALE GENOMIC DNA]</scope>
    <source>
        <strain>B100</strain>
    </source>
</reference>
<evidence type="ECO:0000255" key="1">
    <source>
        <dbReference type="HAMAP-Rule" id="MF_00575"/>
    </source>
</evidence>
<sequence length="247" mass="26876">MTTLFISDLHLDPARPAITELFLDFLRTQVPGSDALYILGDLFEAWIGDDTPSTAADAVAEALHAVATTGVPVFFMPGNRDFLVGAAYAQRAGFRILPDPTVIDLYGQPTLLMHGDLLCTDDTAYQAFRAQTRDPAFQAQFLSQPLAARVAFAQQARAASHARQSELKQGDQAQFETVTDVAPAEVDATFVRYGLDRIIHGHTHRPAIHIVQAGGRTCTRVVLGDWYEQGSVLRVDADGLALEQLAL</sequence>
<proteinExistence type="inferred from homology"/>
<organism>
    <name type="scientific">Xanthomonas campestris pv. campestris (strain B100)</name>
    <dbReference type="NCBI Taxonomy" id="509169"/>
    <lineage>
        <taxon>Bacteria</taxon>
        <taxon>Pseudomonadati</taxon>
        <taxon>Pseudomonadota</taxon>
        <taxon>Gammaproteobacteria</taxon>
        <taxon>Lysobacterales</taxon>
        <taxon>Lysobacteraceae</taxon>
        <taxon>Xanthomonas</taxon>
    </lineage>
</organism>
<accession>B0RU17</accession>
<protein>
    <recommendedName>
        <fullName evidence="1">UDP-2,3-diacylglucosamine hydrolase</fullName>
        <ecNumber evidence="1">3.6.1.54</ecNumber>
    </recommendedName>
    <alternativeName>
        <fullName evidence="1">UDP-2,3-diacylglucosamine diphosphatase</fullName>
    </alternativeName>
</protein>
<comment type="function">
    <text evidence="1">Hydrolyzes the pyrophosphate bond of UDP-2,3-diacylglucosamine to yield 2,3-diacylglucosamine 1-phosphate (lipid X) and UMP by catalyzing the attack of water at the alpha-P atom. Involved in the biosynthesis of lipid A, a phosphorylated glycolipid that anchors the lipopolysaccharide to the outer membrane of the cell.</text>
</comment>
<comment type="catalytic activity">
    <reaction evidence="1">
        <text>UDP-2-N,3-O-bis[(3R)-3-hydroxytetradecanoyl]-alpha-D-glucosamine + H2O = 2-N,3-O-bis[(3R)-3-hydroxytetradecanoyl]-alpha-D-glucosaminyl 1-phosphate + UMP + 2 H(+)</text>
        <dbReference type="Rhea" id="RHEA:25213"/>
        <dbReference type="ChEBI" id="CHEBI:15377"/>
        <dbReference type="ChEBI" id="CHEBI:15378"/>
        <dbReference type="ChEBI" id="CHEBI:57865"/>
        <dbReference type="ChEBI" id="CHEBI:57957"/>
        <dbReference type="ChEBI" id="CHEBI:78847"/>
        <dbReference type="EC" id="3.6.1.54"/>
    </reaction>
</comment>
<comment type="cofactor">
    <cofactor evidence="1">
        <name>Mn(2+)</name>
        <dbReference type="ChEBI" id="CHEBI:29035"/>
    </cofactor>
    <text evidence="1">Binds 2 Mn(2+) ions per subunit in a binuclear metal center.</text>
</comment>
<comment type="pathway">
    <text evidence="1">Glycolipid biosynthesis; lipid IV(A) biosynthesis; lipid IV(A) from (3R)-3-hydroxytetradecanoyl-[acyl-carrier-protein] and UDP-N-acetyl-alpha-D-glucosamine: step 4/6.</text>
</comment>
<comment type="subcellular location">
    <subcellularLocation>
        <location evidence="1">Cell inner membrane</location>
        <topology evidence="1">Peripheral membrane protein</topology>
        <orientation evidence="1">Cytoplasmic side</orientation>
    </subcellularLocation>
</comment>
<comment type="similarity">
    <text evidence="1">Belongs to the LpxH family.</text>
</comment>
<name>LPXH_XANCB</name>
<keyword id="KW-0997">Cell inner membrane</keyword>
<keyword id="KW-1003">Cell membrane</keyword>
<keyword id="KW-0378">Hydrolase</keyword>
<keyword id="KW-0441">Lipid A biosynthesis</keyword>
<keyword id="KW-0444">Lipid biosynthesis</keyword>
<keyword id="KW-0443">Lipid metabolism</keyword>
<keyword id="KW-0464">Manganese</keyword>
<keyword id="KW-0472">Membrane</keyword>
<keyword id="KW-0479">Metal-binding</keyword>